<accession>O32913</accession>
<dbReference type="EC" id="2.3.3.9" evidence="1"/>
<dbReference type="EMBL" id="AL008609">
    <property type="protein sequence ID" value="CAA15459.1"/>
    <property type="molecule type" value="Genomic_DNA"/>
</dbReference>
<dbReference type="EMBL" id="AL583924">
    <property type="protein sequence ID" value="CAC31024.1"/>
    <property type="molecule type" value="Genomic_DNA"/>
</dbReference>
<dbReference type="PIR" id="T44752">
    <property type="entry name" value="T44752"/>
</dbReference>
<dbReference type="RefSeq" id="NP_302379.1">
    <property type="nucleotide sequence ID" value="NC_002677.1"/>
</dbReference>
<dbReference type="RefSeq" id="WP_010908699.1">
    <property type="nucleotide sequence ID" value="NC_002677.1"/>
</dbReference>
<dbReference type="SMR" id="O32913"/>
<dbReference type="STRING" id="272631.gene:17575921"/>
<dbReference type="KEGG" id="mle:ML2069"/>
<dbReference type="PATRIC" id="fig|272631.5.peg.3896"/>
<dbReference type="Leproma" id="ML2069"/>
<dbReference type="eggNOG" id="COG2225">
    <property type="taxonomic scope" value="Bacteria"/>
</dbReference>
<dbReference type="HOGENOM" id="CLU_028446_1_0_11"/>
<dbReference type="OrthoDB" id="9762054at2"/>
<dbReference type="UniPathway" id="UPA00703">
    <property type="reaction ID" value="UER00720"/>
</dbReference>
<dbReference type="Proteomes" id="UP000000806">
    <property type="component" value="Chromosome"/>
</dbReference>
<dbReference type="GO" id="GO:0005829">
    <property type="term" value="C:cytosol"/>
    <property type="evidence" value="ECO:0007669"/>
    <property type="project" value="TreeGrafter"/>
</dbReference>
<dbReference type="GO" id="GO:0000287">
    <property type="term" value="F:magnesium ion binding"/>
    <property type="evidence" value="ECO:0007669"/>
    <property type="project" value="TreeGrafter"/>
</dbReference>
<dbReference type="GO" id="GO:0004474">
    <property type="term" value="F:malate synthase activity"/>
    <property type="evidence" value="ECO:0007669"/>
    <property type="project" value="UniProtKB-UniRule"/>
</dbReference>
<dbReference type="GO" id="GO:0009436">
    <property type="term" value="P:glyoxylate catabolic process"/>
    <property type="evidence" value="ECO:0007669"/>
    <property type="project" value="TreeGrafter"/>
</dbReference>
<dbReference type="GO" id="GO:0006097">
    <property type="term" value="P:glyoxylate cycle"/>
    <property type="evidence" value="ECO:0007669"/>
    <property type="project" value="UniProtKB-UniRule"/>
</dbReference>
<dbReference type="GO" id="GO:0006099">
    <property type="term" value="P:tricarboxylic acid cycle"/>
    <property type="evidence" value="ECO:0007669"/>
    <property type="project" value="UniProtKB-KW"/>
</dbReference>
<dbReference type="CDD" id="cd00728">
    <property type="entry name" value="malate_synt_G"/>
    <property type="match status" value="1"/>
</dbReference>
<dbReference type="FunFam" id="3.20.20.360:FF:000002">
    <property type="entry name" value="Malate synthase G"/>
    <property type="match status" value="1"/>
</dbReference>
<dbReference type="Gene3D" id="3.20.20.360">
    <property type="entry name" value="Malate synthase, domain 3"/>
    <property type="match status" value="2"/>
</dbReference>
<dbReference type="Gene3D" id="1.20.1220.12">
    <property type="entry name" value="Malate synthase, domain III"/>
    <property type="match status" value="1"/>
</dbReference>
<dbReference type="HAMAP" id="MF_00641">
    <property type="entry name" value="Malate_synth_G"/>
    <property type="match status" value="1"/>
</dbReference>
<dbReference type="InterPro" id="IPR044856">
    <property type="entry name" value="Malate_synth_C_sf"/>
</dbReference>
<dbReference type="InterPro" id="IPR011076">
    <property type="entry name" value="Malate_synth_sf"/>
</dbReference>
<dbReference type="InterPro" id="IPR001465">
    <property type="entry name" value="Malate_synthase_TIM"/>
</dbReference>
<dbReference type="InterPro" id="IPR006253">
    <property type="entry name" value="Malate_synthG"/>
</dbReference>
<dbReference type="InterPro" id="IPR048355">
    <property type="entry name" value="MS_C"/>
</dbReference>
<dbReference type="InterPro" id="IPR048356">
    <property type="entry name" value="MS_N"/>
</dbReference>
<dbReference type="InterPro" id="IPR046363">
    <property type="entry name" value="MS_N_TIM-barrel_dom"/>
</dbReference>
<dbReference type="InterPro" id="IPR048357">
    <property type="entry name" value="MSG_insertion"/>
</dbReference>
<dbReference type="NCBIfam" id="TIGR01345">
    <property type="entry name" value="malate_syn_G"/>
    <property type="match status" value="1"/>
</dbReference>
<dbReference type="NCBIfam" id="NF002825">
    <property type="entry name" value="PRK02999.1"/>
    <property type="match status" value="1"/>
</dbReference>
<dbReference type="PANTHER" id="PTHR42739">
    <property type="entry name" value="MALATE SYNTHASE G"/>
    <property type="match status" value="1"/>
</dbReference>
<dbReference type="PANTHER" id="PTHR42739:SF1">
    <property type="entry name" value="MALATE SYNTHASE G"/>
    <property type="match status" value="1"/>
</dbReference>
<dbReference type="Pfam" id="PF20659">
    <property type="entry name" value="MS_C"/>
    <property type="match status" value="1"/>
</dbReference>
<dbReference type="Pfam" id="PF20656">
    <property type="entry name" value="MS_N"/>
    <property type="match status" value="1"/>
</dbReference>
<dbReference type="Pfam" id="PF01274">
    <property type="entry name" value="MS_TIM-barrel"/>
    <property type="match status" value="1"/>
</dbReference>
<dbReference type="Pfam" id="PF20658">
    <property type="entry name" value="MSG_insertion"/>
    <property type="match status" value="1"/>
</dbReference>
<dbReference type="SUPFAM" id="SSF51645">
    <property type="entry name" value="Malate synthase G"/>
    <property type="match status" value="1"/>
</dbReference>
<reference key="1">
    <citation type="journal article" date="2001" name="Nature">
        <title>Massive gene decay in the leprosy bacillus.</title>
        <authorList>
            <person name="Cole S.T."/>
            <person name="Eiglmeier K."/>
            <person name="Parkhill J."/>
            <person name="James K.D."/>
            <person name="Thomson N.R."/>
            <person name="Wheeler P.R."/>
            <person name="Honore N."/>
            <person name="Garnier T."/>
            <person name="Churcher C.M."/>
            <person name="Harris D.E."/>
            <person name="Mungall K.L."/>
            <person name="Basham D."/>
            <person name="Brown D."/>
            <person name="Chillingworth T."/>
            <person name="Connor R."/>
            <person name="Davies R.M."/>
            <person name="Devlin K."/>
            <person name="Duthoy S."/>
            <person name="Feltwell T."/>
            <person name="Fraser A."/>
            <person name="Hamlin N."/>
            <person name="Holroyd S."/>
            <person name="Hornsby T."/>
            <person name="Jagels K."/>
            <person name="Lacroix C."/>
            <person name="Maclean J."/>
            <person name="Moule S."/>
            <person name="Murphy L.D."/>
            <person name="Oliver K."/>
            <person name="Quail M.A."/>
            <person name="Rajandream M.A."/>
            <person name="Rutherford K.M."/>
            <person name="Rutter S."/>
            <person name="Seeger K."/>
            <person name="Simon S."/>
            <person name="Simmonds M."/>
            <person name="Skelton J."/>
            <person name="Squares R."/>
            <person name="Squares S."/>
            <person name="Stevens K."/>
            <person name="Taylor K."/>
            <person name="Whitehead S."/>
            <person name="Woodward J.R."/>
            <person name="Barrell B.G."/>
        </authorList>
    </citation>
    <scope>NUCLEOTIDE SEQUENCE [LARGE SCALE GENOMIC DNA]</scope>
    <source>
        <strain>TN</strain>
    </source>
</reference>
<comment type="function">
    <text evidence="1">Involved in the glycolate utilization. Catalyzes the condensation and subsequent hydrolysis of acetyl-coenzyme A (acetyl-CoA) and glyoxylate to form malate and CoA.</text>
</comment>
<comment type="catalytic activity">
    <reaction evidence="1">
        <text>glyoxylate + acetyl-CoA + H2O = (S)-malate + CoA + H(+)</text>
        <dbReference type="Rhea" id="RHEA:18181"/>
        <dbReference type="ChEBI" id="CHEBI:15377"/>
        <dbReference type="ChEBI" id="CHEBI:15378"/>
        <dbReference type="ChEBI" id="CHEBI:15589"/>
        <dbReference type="ChEBI" id="CHEBI:36655"/>
        <dbReference type="ChEBI" id="CHEBI:57287"/>
        <dbReference type="ChEBI" id="CHEBI:57288"/>
        <dbReference type="EC" id="2.3.3.9"/>
    </reaction>
</comment>
<comment type="cofactor">
    <cofactor evidence="1">
        <name>Mg(2+)</name>
        <dbReference type="ChEBI" id="CHEBI:18420"/>
    </cofactor>
</comment>
<comment type="pathway">
    <text evidence="1">Carbohydrate metabolism; glyoxylate cycle; (S)-malate from isocitrate: step 2/2.</text>
</comment>
<comment type="subunit">
    <text evidence="1">Monomer.</text>
</comment>
<comment type="subcellular location">
    <subcellularLocation>
        <location evidence="1">Cytoplasm</location>
    </subcellularLocation>
</comment>
<comment type="similarity">
    <text evidence="1">Belongs to the malate synthase family. GlcB subfamily.</text>
</comment>
<protein>
    <recommendedName>
        <fullName evidence="1">Malate synthase G</fullName>
        <ecNumber evidence="1">2.3.3.9</ecNumber>
    </recommendedName>
</protein>
<keyword id="KW-0963">Cytoplasm</keyword>
<keyword id="KW-0329">Glyoxylate bypass</keyword>
<keyword id="KW-0460">Magnesium</keyword>
<keyword id="KW-0479">Metal-binding</keyword>
<keyword id="KW-0558">Oxidation</keyword>
<keyword id="KW-1185">Reference proteome</keyword>
<keyword id="KW-0808">Transferase</keyword>
<keyword id="KW-0816">Tricarboxylic acid cycle</keyword>
<sequence length="731" mass="80142">MTDRVSAGNLRVARVLYDFVNNEALPGTDINPNSFWSGVAKVVADLTPQNQSLLNSRDELQAQIDKWHRHRVIEPFDVDAYRQFLIDIGYLLPEPDDFTISTSGVDDEITMTAGPQLVVPVLNARFALNAANARWGSLYDALYGTDTIPETEGAEKGSEYNKIRGDKVIAYARKFMDQAVPLASDSWTNATGVSIFDGQLQIAIGTNSTGLASPEKFVGYNRQLRSSNWSVLLANHGLHIEVLIDPESPIGKTDPVGIKDVILESAITTIMDFEDSVTAVDADDKVRGYRNWLGLNKGDLTEEVNKDGKTFTRVLNADRSYTTPDGGELTLPGRSLLFVRNVGHLTTSDAILVDGGDGQEKEVFEGIIDAVFTGLAAIHGLKTGEANGPLTNSRTGSIYIVKPKMHGPAEVAFTCELFSRVEDVLGLPQGTLKVGIMDEERRTTLNLKACIKAAADRVVFINTGFLDRTGDEIHTSMEAGPMIRKGAMKNSTWIKAYEDANVDIGLAAGFKGKAQIGKGMWAMTELMADMVEQKIGQPKAGATTAWVPSPTAATLHAMHYHQVDVAAVQQELTGQRRATVDQLLTIPLAKKLAWAPEEIREEVDNDCQSILGYVVRWVDQGIGCSKVPDIHNVALMEDRATLRISSQLLANWLRHGVITSEDVRASLERMAPLVDQQNAEDPAYRPMAPNFDDSIAFLAAQELILSGAQQPNGYTEPILHRRRREFKAQNR</sequence>
<name>MASZ_MYCLE</name>
<gene>
    <name evidence="1" type="primary">glcB</name>
    <name type="ordered locus">ML2069</name>
    <name type="ORF">MLCB1788.27</name>
</gene>
<evidence type="ECO:0000255" key="1">
    <source>
        <dbReference type="HAMAP-Rule" id="MF_00641"/>
    </source>
</evidence>
<proteinExistence type="inferred from homology"/>
<feature type="chain" id="PRO_0000166888" description="Malate synthase G">
    <location>
        <begin position="1"/>
        <end position="731"/>
    </location>
</feature>
<feature type="active site" description="Proton acceptor" evidence="1">
    <location>
        <position position="340"/>
    </location>
</feature>
<feature type="active site" description="Proton donor" evidence="1">
    <location>
        <position position="638"/>
    </location>
</feature>
<feature type="binding site" evidence="1">
    <location>
        <position position="118"/>
    </location>
    <ligand>
        <name>acetyl-CoA</name>
        <dbReference type="ChEBI" id="CHEBI:57288"/>
    </ligand>
</feature>
<feature type="binding site" evidence="1">
    <location>
        <begin position="125"/>
        <end position="126"/>
    </location>
    <ligand>
        <name>acetyl-CoA</name>
        <dbReference type="ChEBI" id="CHEBI:57288"/>
    </ligand>
</feature>
<feature type="binding site" evidence="1">
    <location>
        <position position="276"/>
    </location>
    <ligand>
        <name>acetyl-CoA</name>
        <dbReference type="ChEBI" id="CHEBI:57288"/>
    </ligand>
</feature>
<feature type="binding site" evidence="1">
    <location>
        <position position="313"/>
    </location>
    <ligand>
        <name>acetyl-CoA</name>
        <dbReference type="ChEBI" id="CHEBI:57288"/>
    </ligand>
</feature>
<feature type="binding site" evidence="1">
    <location>
        <position position="340"/>
    </location>
    <ligand>
        <name>glyoxylate</name>
        <dbReference type="ChEBI" id="CHEBI:36655"/>
    </ligand>
</feature>
<feature type="binding site" evidence="1">
    <location>
        <position position="439"/>
    </location>
    <ligand>
        <name>glyoxylate</name>
        <dbReference type="ChEBI" id="CHEBI:36655"/>
    </ligand>
</feature>
<feature type="binding site" evidence="1">
    <location>
        <position position="439"/>
    </location>
    <ligand>
        <name>Mg(2+)</name>
        <dbReference type="ChEBI" id="CHEBI:18420"/>
    </ligand>
</feature>
<feature type="binding site" evidence="1">
    <location>
        <begin position="464"/>
        <end position="467"/>
    </location>
    <ligand>
        <name>glyoxylate</name>
        <dbReference type="ChEBI" id="CHEBI:36655"/>
    </ligand>
</feature>
<feature type="binding site" evidence="1">
    <location>
        <position position="467"/>
    </location>
    <ligand>
        <name>Mg(2+)</name>
        <dbReference type="ChEBI" id="CHEBI:18420"/>
    </ligand>
</feature>
<feature type="binding site" evidence="1">
    <location>
        <position position="548"/>
    </location>
    <ligand>
        <name>acetyl-CoA</name>
        <dbReference type="ChEBI" id="CHEBI:57288"/>
    </ligand>
</feature>
<feature type="modified residue" description="Cysteine sulfenic acid (-SOH)" evidence="1">
    <location>
        <position position="624"/>
    </location>
</feature>
<organism>
    <name type="scientific">Mycobacterium leprae (strain TN)</name>
    <dbReference type="NCBI Taxonomy" id="272631"/>
    <lineage>
        <taxon>Bacteria</taxon>
        <taxon>Bacillati</taxon>
        <taxon>Actinomycetota</taxon>
        <taxon>Actinomycetes</taxon>
        <taxon>Mycobacteriales</taxon>
        <taxon>Mycobacteriaceae</taxon>
        <taxon>Mycobacterium</taxon>
    </lineage>
</organism>